<organism>
    <name type="scientific">Helicobacter pylori (strain ATCC 700392 / 26695)</name>
    <name type="common">Campylobacter pylori</name>
    <dbReference type="NCBI Taxonomy" id="85962"/>
    <lineage>
        <taxon>Bacteria</taxon>
        <taxon>Pseudomonadati</taxon>
        <taxon>Campylobacterota</taxon>
        <taxon>Epsilonproteobacteria</taxon>
        <taxon>Campylobacterales</taxon>
        <taxon>Helicobacteraceae</taxon>
        <taxon>Helicobacter</taxon>
    </lineage>
</organism>
<protein>
    <recommendedName>
        <fullName evidence="6">Zinc protease PqqE</fullName>
        <ecNumber evidence="5">3.4.24.-</ecNumber>
    </recommendedName>
</protein>
<gene>
    <name evidence="6" type="primary">pqqE</name>
    <name evidence="8" type="ordered locus">HP_1012</name>
</gene>
<dbReference type="EC" id="3.4.24.-" evidence="5"/>
<dbReference type="EMBL" id="AE000511">
    <property type="protein sequence ID" value="AAD08056.1"/>
    <property type="molecule type" value="Genomic_DNA"/>
</dbReference>
<dbReference type="PIR" id="D64646">
    <property type="entry name" value="D64646"/>
</dbReference>
<dbReference type="RefSeq" id="NP_207802.1">
    <property type="nucleotide sequence ID" value="NC_000915.1"/>
</dbReference>
<dbReference type="RefSeq" id="WP_000680224.1">
    <property type="nucleotide sequence ID" value="NC_018939.1"/>
</dbReference>
<dbReference type="SMR" id="O25656"/>
<dbReference type="DIP" id="DIP-3200N"/>
<dbReference type="FunCoup" id="O25656">
    <property type="interactions" value="6"/>
</dbReference>
<dbReference type="IntAct" id="O25656">
    <property type="interactions" value="8"/>
</dbReference>
<dbReference type="MINT" id="O25656"/>
<dbReference type="STRING" id="85962.HP_1012"/>
<dbReference type="PaxDb" id="85962-C694_05240"/>
<dbReference type="DNASU" id="899547"/>
<dbReference type="EnsemblBacteria" id="AAD08056">
    <property type="protein sequence ID" value="AAD08056"/>
    <property type="gene ID" value="HP_1012"/>
</dbReference>
<dbReference type="KEGG" id="heo:C694_05240"/>
<dbReference type="KEGG" id="hpy:HP_1012"/>
<dbReference type="PATRIC" id="fig|85962.47.peg.1091"/>
<dbReference type="eggNOG" id="COG0612">
    <property type="taxonomic scope" value="Bacteria"/>
</dbReference>
<dbReference type="InParanoid" id="O25656"/>
<dbReference type="OrthoDB" id="9811314at2"/>
<dbReference type="PhylomeDB" id="O25656"/>
<dbReference type="PHI-base" id="PHI:11338"/>
<dbReference type="Proteomes" id="UP000000429">
    <property type="component" value="Chromosome"/>
</dbReference>
<dbReference type="GO" id="GO:0005576">
    <property type="term" value="C:extracellular region"/>
    <property type="evidence" value="ECO:0007669"/>
    <property type="project" value="UniProtKB-SubCell"/>
</dbReference>
<dbReference type="GO" id="GO:0046872">
    <property type="term" value="F:metal ion binding"/>
    <property type="evidence" value="ECO:0007669"/>
    <property type="project" value="UniProtKB-KW"/>
</dbReference>
<dbReference type="GO" id="GO:0004222">
    <property type="term" value="F:metalloendopeptidase activity"/>
    <property type="evidence" value="ECO:0007669"/>
    <property type="project" value="InterPro"/>
</dbReference>
<dbReference type="GO" id="GO:0006508">
    <property type="term" value="P:proteolysis"/>
    <property type="evidence" value="ECO:0007669"/>
    <property type="project" value="UniProtKB-KW"/>
</dbReference>
<dbReference type="Gene3D" id="3.30.830.10">
    <property type="entry name" value="Metalloenzyme, LuxS/M16 peptidase-like"/>
    <property type="match status" value="2"/>
</dbReference>
<dbReference type="InterPro" id="IPR011249">
    <property type="entry name" value="Metalloenz_LuxS/M16"/>
</dbReference>
<dbReference type="InterPro" id="IPR050361">
    <property type="entry name" value="MPP/UQCRC_Complex"/>
</dbReference>
<dbReference type="InterPro" id="IPR011765">
    <property type="entry name" value="Pept_M16_N"/>
</dbReference>
<dbReference type="InterPro" id="IPR001431">
    <property type="entry name" value="Pept_M16_Zn_BS"/>
</dbReference>
<dbReference type="InterPro" id="IPR007863">
    <property type="entry name" value="Peptidase_M16_C"/>
</dbReference>
<dbReference type="PANTHER" id="PTHR11851">
    <property type="entry name" value="METALLOPROTEASE"/>
    <property type="match status" value="1"/>
</dbReference>
<dbReference type="PANTHER" id="PTHR11851:SF49">
    <property type="entry name" value="MITOCHONDRIAL-PROCESSING PEPTIDASE SUBUNIT ALPHA"/>
    <property type="match status" value="1"/>
</dbReference>
<dbReference type="Pfam" id="PF00675">
    <property type="entry name" value="Peptidase_M16"/>
    <property type="match status" value="1"/>
</dbReference>
<dbReference type="Pfam" id="PF05193">
    <property type="entry name" value="Peptidase_M16_C"/>
    <property type="match status" value="1"/>
</dbReference>
<dbReference type="SUPFAM" id="SSF63411">
    <property type="entry name" value="LuxS/MPP-like metallohydrolase"/>
    <property type="match status" value="2"/>
</dbReference>
<dbReference type="PROSITE" id="PS00143">
    <property type="entry name" value="INSULINASE"/>
    <property type="match status" value="1"/>
</dbReference>
<comment type="function">
    <text evidence="5">Virulence factor that cleaves the cytoplasmic domain of the human junctional adhesion molecule A (JAM-A), compromising gastric epithelial barrier function and cell-cell adhesion (PubMed:33970782). Cleavage of JAM-A occurs after Ala-285 or, to a lesser extent, before Ala-285 (PubMed:33970782).</text>
</comment>
<comment type="cofactor">
    <cofactor evidence="1">
        <name>Zn(2+)</name>
        <dbReference type="ChEBI" id="CHEBI:29105"/>
    </cofactor>
    <text evidence="1">Binds 1 zinc ion per subunit.</text>
</comment>
<comment type="activity regulation">
    <text evidence="5">Can function alone, but full activity requires the presence of the non-peptidase homolog YmxG.</text>
</comment>
<comment type="subcellular location">
    <subcellularLocation>
        <location evidence="4">Secreted</location>
    </subcellularLocation>
</comment>
<comment type="disruption phenotype">
    <text evidence="5">Essential, it cannot be deleted.</text>
</comment>
<comment type="similarity">
    <text evidence="7">Belongs to the peptidase M16 family.</text>
</comment>
<proteinExistence type="evidence at protein level"/>
<reference key="1">
    <citation type="journal article" date="1997" name="Nature">
        <title>The complete genome sequence of the gastric pathogen Helicobacter pylori.</title>
        <authorList>
            <person name="Tomb J.-F."/>
            <person name="White O."/>
            <person name="Kerlavage A.R."/>
            <person name="Clayton R.A."/>
            <person name="Sutton G.G."/>
            <person name="Fleischmann R.D."/>
            <person name="Ketchum K.A."/>
            <person name="Klenk H.-P."/>
            <person name="Gill S.R."/>
            <person name="Dougherty B.A."/>
            <person name="Nelson K.E."/>
            <person name="Quackenbush J."/>
            <person name="Zhou L."/>
            <person name="Kirkness E.F."/>
            <person name="Peterson S.N."/>
            <person name="Loftus B.J."/>
            <person name="Richardson D.L."/>
            <person name="Dodson R.J."/>
            <person name="Khalak H.G."/>
            <person name="Glodek A."/>
            <person name="McKenney K."/>
            <person name="FitzGerald L.M."/>
            <person name="Lee N."/>
            <person name="Adams M.D."/>
            <person name="Hickey E.K."/>
            <person name="Berg D.E."/>
            <person name="Gocayne J.D."/>
            <person name="Utterback T.R."/>
            <person name="Peterson J.D."/>
            <person name="Kelley J.M."/>
            <person name="Cotton M.D."/>
            <person name="Weidman J.F."/>
            <person name="Fujii C."/>
            <person name="Bowman C."/>
            <person name="Watthey L."/>
            <person name="Wallin E."/>
            <person name="Hayes W.S."/>
            <person name="Borodovsky M."/>
            <person name="Karp P.D."/>
            <person name="Smith H.O."/>
            <person name="Fraser C.M."/>
            <person name="Venter J.C."/>
        </authorList>
    </citation>
    <scope>NUCLEOTIDE SEQUENCE [LARGE SCALE GENOMIC DNA]</scope>
    <source>
        <strain>ATCC 700392 / 26695</strain>
    </source>
</reference>
<reference key="2">
    <citation type="journal article" date="2007" name="Proteomics">
        <title>Direct analysis of the extracellular proteome from two strains of Helicobacter pylori.</title>
        <authorList>
            <person name="Smith T.G."/>
            <person name="Lim J.M."/>
            <person name="Weinberg M.V."/>
            <person name="Wells L."/>
            <person name="Hoover T.R."/>
        </authorList>
    </citation>
    <scope>SUBCELLULAR LOCATION</scope>
    <source>
        <strain>ATCC 43504 / NCTC 11637 / JCM 7653 / RPH 13487</strain>
    </source>
</reference>
<reference key="3">
    <citation type="journal article" date="2021" name="Gut Microbes">
        <title>Helicobacter pylori PqqE is a new virulence factor that cleaves junctional adhesion molecule A and disrupts gastric epithelial integrity.</title>
        <authorList>
            <person name="Marques M.S."/>
            <person name="Costa A.C."/>
            <person name="Osorio H."/>
            <person name="Pinto M.L."/>
            <person name="Relvas S."/>
            <person name="Dinis-Ribeiro M."/>
            <person name="Carneiro F."/>
            <person name="Leite M."/>
            <person name="Figueiredo C."/>
        </authorList>
    </citation>
    <scope>FUNCTION AS A PROTEASE</scope>
    <scope>CATALYTIC ACTIVITY</scope>
    <scope>ACTIVITY REGULATION</scope>
    <scope>DISRUPTION PHENOTYPE</scope>
    <scope>MUTAGENESIS OF 78-HIS--HIS-82</scope>
    <source>
        <strain>ATCC 700392 / 26695</strain>
    </source>
</reference>
<evidence type="ECO:0000250" key="1">
    <source>
        <dbReference type="UniProtKB" id="P10507"/>
    </source>
</evidence>
<evidence type="ECO:0000255" key="2"/>
<evidence type="ECO:0000255" key="3">
    <source>
        <dbReference type="PROSITE-ProRule" id="PRU10096"/>
    </source>
</evidence>
<evidence type="ECO:0000269" key="4">
    <source>
    </source>
</evidence>
<evidence type="ECO:0000269" key="5">
    <source>
    </source>
</evidence>
<evidence type="ECO:0000303" key="6">
    <source>
    </source>
</evidence>
<evidence type="ECO:0000305" key="7"/>
<evidence type="ECO:0000312" key="8">
    <source>
        <dbReference type="EMBL" id="AAD08056.1"/>
    </source>
</evidence>
<feature type="signal peptide" evidence="2">
    <location>
        <begin position="1"/>
        <end position="28"/>
    </location>
</feature>
<feature type="chain" id="PRO_5004157810" description="Zinc protease PqqE" evidence="2">
    <location>
        <begin position="29"/>
        <end position="444"/>
    </location>
</feature>
<feature type="active site" description="Proton acceptor" evidence="3">
    <location>
        <position position="81"/>
    </location>
</feature>
<feature type="binding site" evidence="3">
    <location>
        <position position="78"/>
    </location>
    <ligand>
        <name>Zn(2+)</name>
        <dbReference type="ChEBI" id="CHEBI:29105"/>
    </ligand>
</feature>
<feature type="binding site" evidence="3">
    <location>
        <position position="82"/>
    </location>
    <ligand>
        <name>Zn(2+)</name>
        <dbReference type="ChEBI" id="CHEBI:29105"/>
    </ligand>
</feature>
<feature type="binding site" evidence="3">
    <location>
        <position position="158"/>
    </location>
    <ligand>
        <name>Zn(2+)</name>
        <dbReference type="ChEBI" id="CHEBI:29105"/>
    </ligand>
</feature>
<feature type="mutagenesis site" description="Exhibits very low activity." evidence="5">
    <original>HMLEH</original>
    <variation>QMLQL</variation>
    <location>
        <begin position="78"/>
        <end position="82"/>
    </location>
</feature>
<feature type="mutagenesis site" description="Loss of activity." evidence="5">
    <location>
        <begin position="78"/>
        <end position="82"/>
    </location>
</feature>
<keyword id="KW-0378">Hydrolase</keyword>
<keyword id="KW-0479">Metal-binding</keyword>
<keyword id="KW-0482">Metalloprotease</keyword>
<keyword id="KW-0645">Protease</keyword>
<keyword id="KW-1185">Reference proteome</keyword>
<keyword id="KW-0964">Secreted</keyword>
<keyword id="KW-0732">Signal</keyword>
<keyword id="KW-0843">Virulence</keyword>
<keyword id="KW-0862">Zinc</keyword>
<name>PPQQE_HELPY</name>
<sequence length="444" mass="50331">MKHFSVKRLLGLSSVLLVTLGASMHAQSYLPKHESVTLKNGLQVVSVPLENKTGVIEVDVLYKVGSRNETMGKSGIAHMLEHLNFKSTKNLKAGEFDKIVKRFGGVSNASTSFDITRYFIKTSQANLDKSLELFAETMGSLNLKEDEFLPERQVVAEERRWRTDNSPIGMLYFRFFNTAYVYHPYHWTPIGFMDDIQNWTLKDIKKFHSLYYQPKNAIVLVVGDVNSQKVFELSKKHFESLKNLDEKAIPTPYMKEPKQDGARTAVVHKDGVHLEWVALGYKVPAFKHKDQVALDALSRLLGEGKSSWLQSELVDKKRLASQAFSHNMQLQDESVFLFIAGGNPNVKAEALQKEIVALLEKLKKGEITQAELDKLKINQKADFISNLESSSDVAGLFADYLVQNDIQGLTDYQRQFLDLKVSDLVRVANEYFKDTQSTTVFLKP</sequence>
<accession>O25656</accession>